<reference key="1">
    <citation type="submission" date="2005-11" db="EMBL/GenBank/DDBJ databases">
        <title>The complete genome sequence of Lawsonia intracellularis: the causative agent of proliferative enteropathy.</title>
        <authorList>
            <person name="Kaur K."/>
            <person name="Zhang Q."/>
            <person name="Beckler D."/>
            <person name="Munir S."/>
            <person name="Li L."/>
            <person name="Kinsley K."/>
            <person name="Herron L."/>
            <person name="Peterson A."/>
            <person name="May B."/>
            <person name="Singh S."/>
            <person name="Gebhart C."/>
            <person name="Kapur V."/>
        </authorList>
    </citation>
    <scope>NUCLEOTIDE SEQUENCE [LARGE SCALE GENOMIC DNA]</scope>
    <source>
        <strain>PHE/MN1-00</strain>
    </source>
</reference>
<accession>Q1MRD7</accession>
<sequence>MDTDKDKIFLDSQERMVKAITSLEKEFTKLRTGRASTSIVDTIKVDYYGTPTPINQLASIAIPDSSSITIQPWDKTAFNPIEKAILKSELGLTPINDGKIIRITLPPLTEDRRKDLVKLARKYGEDTKIAIRNIRRDANEQLKRLEKNKFISEDELKGFTEDIQKMTDNYIKEVETHCKTKEKEIIEI</sequence>
<proteinExistence type="inferred from homology"/>
<comment type="function">
    <text evidence="1">Responsible for the release of ribosomes from messenger RNA at the termination of protein biosynthesis. May increase the efficiency of translation by recycling ribosomes from one round of translation to another.</text>
</comment>
<comment type="subcellular location">
    <subcellularLocation>
        <location evidence="1">Cytoplasm</location>
    </subcellularLocation>
</comment>
<comment type="similarity">
    <text evidence="1">Belongs to the RRF family.</text>
</comment>
<organism>
    <name type="scientific">Lawsonia intracellularis (strain PHE/MN1-00)</name>
    <dbReference type="NCBI Taxonomy" id="363253"/>
    <lineage>
        <taxon>Bacteria</taxon>
        <taxon>Pseudomonadati</taxon>
        <taxon>Thermodesulfobacteriota</taxon>
        <taxon>Desulfovibrionia</taxon>
        <taxon>Desulfovibrionales</taxon>
        <taxon>Desulfovibrionaceae</taxon>
        <taxon>Lawsonia</taxon>
    </lineage>
</organism>
<evidence type="ECO:0000255" key="1">
    <source>
        <dbReference type="HAMAP-Rule" id="MF_00040"/>
    </source>
</evidence>
<feature type="chain" id="PRO_0000341015" description="Ribosome-recycling factor">
    <location>
        <begin position="1"/>
        <end position="188"/>
    </location>
</feature>
<keyword id="KW-0963">Cytoplasm</keyword>
<keyword id="KW-0648">Protein biosynthesis</keyword>
<keyword id="KW-1185">Reference proteome</keyword>
<protein>
    <recommendedName>
        <fullName evidence="1">Ribosome-recycling factor</fullName>
        <shortName evidence="1">RRF</shortName>
    </recommendedName>
    <alternativeName>
        <fullName evidence="1">Ribosome-releasing factor</fullName>
    </alternativeName>
</protein>
<dbReference type="EMBL" id="AM180252">
    <property type="protein sequence ID" value="CAJ54439.1"/>
    <property type="molecule type" value="Genomic_DNA"/>
</dbReference>
<dbReference type="RefSeq" id="WP_011526468.1">
    <property type="nucleotide sequence ID" value="NC_008011.1"/>
</dbReference>
<dbReference type="SMR" id="Q1MRD7"/>
<dbReference type="STRING" id="363253.LI0383"/>
<dbReference type="KEGG" id="lip:LI0383"/>
<dbReference type="eggNOG" id="COG0233">
    <property type="taxonomic scope" value="Bacteria"/>
</dbReference>
<dbReference type="HOGENOM" id="CLU_073981_2_0_7"/>
<dbReference type="OrthoDB" id="9804006at2"/>
<dbReference type="Proteomes" id="UP000002430">
    <property type="component" value="Chromosome"/>
</dbReference>
<dbReference type="GO" id="GO:0005737">
    <property type="term" value="C:cytoplasm"/>
    <property type="evidence" value="ECO:0007669"/>
    <property type="project" value="UniProtKB-SubCell"/>
</dbReference>
<dbReference type="GO" id="GO:0043023">
    <property type="term" value="F:ribosomal large subunit binding"/>
    <property type="evidence" value="ECO:0007669"/>
    <property type="project" value="TreeGrafter"/>
</dbReference>
<dbReference type="GO" id="GO:0006415">
    <property type="term" value="P:translational termination"/>
    <property type="evidence" value="ECO:0007669"/>
    <property type="project" value="UniProtKB-UniRule"/>
</dbReference>
<dbReference type="CDD" id="cd00520">
    <property type="entry name" value="RRF"/>
    <property type="match status" value="1"/>
</dbReference>
<dbReference type="FunFam" id="1.10.132.20:FF:000001">
    <property type="entry name" value="Ribosome-recycling factor"/>
    <property type="match status" value="1"/>
</dbReference>
<dbReference type="FunFam" id="3.30.1360.40:FF:000001">
    <property type="entry name" value="Ribosome-recycling factor"/>
    <property type="match status" value="1"/>
</dbReference>
<dbReference type="Gene3D" id="3.30.1360.40">
    <property type="match status" value="1"/>
</dbReference>
<dbReference type="Gene3D" id="1.10.132.20">
    <property type="entry name" value="Ribosome-recycling factor"/>
    <property type="match status" value="1"/>
</dbReference>
<dbReference type="HAMAP" id="MF_00040">
    <property type="entry name" value="RRF"/>
    <property type="match status" value="1"/>
</dbReference>
<dbReference type="InterPro" id="IPR002661">
    <property type="entry name" value="Ribosome_recyc_fac"/>
</dbReference>
<dbReference type="InterPro" id="IPR023584">
    <property type="entry name" value="Ribosome_recyc_fac_dom"/>
</dbReference>
<dbReference type="InterPro" id="IPR036191">
    <property type="entry name" value="RRF_sf"/>
</dbReference>
<dbReference type="NCBIfam" id="TIGR00496">
    <property type="entry name" value="frr"/>
    <property type="match status" value="1"/>
</dbReference>
<dbReference type="PANTHER" id="PTHR20982:SF3">
    <property type="entry name" value="MITOCHONDRIAL RIBOSOME RECYCLING FACTOR PSEUDO 1"/>
    <property type="match status" value="1"/>
</dbReference>
<dbReference type="PANTHER" id="PTHR20982">
    <property type="entry name" value="RIBOSOME RECYCLING FACTOR"/>
    <property type="match status" value="1"/>
</dbReference>
<dbReference type="Pfam" id="PF01765">
    <property type="entry name" value="RRF"/>
    <property type="match status" value="1"/>
</dbReference>
<dbReference type="SUPFAM" id="SSF55194">
    <property type="entry name" value="Ribosome recycling factor, RRF"/>
    <property type="match status" value="1"/>
</dbReference>
<gene>
    <name evidence="1" type="primary">frr</name>
    <name type="ordered locus">LI0383</name>
</gene>
<name>RRF_LAWIP</name>